<feature type="chain" id="PRO_0000360277" description="NAD(P)H-quinone oxidoreductase subunit 6, chloroplastic">
    <location>
        <begin position="1"/>
        <end position="176"/>
    </location>
</feature>
<feature type="transmembrane region" description="Helical" evidence="2">
    <location>
        <begin position="10"/>
        <end position="30"/>
    </location>
</feature>
<feature type="transmembrane region" description="Helical" evidence="2">
    <location>
        <begin position="32"/>
        <end position="52"/>
    </location>
</feature>
<feature type="transmembrane region" description="Helical" evidence="2">
    <location>
        <begin position="61"/>
        <end position="81"/>
    </location>
</feature>
<feature type="transmembrane region" description="Helical" evidence="2">
    <location>
        <begin position="92"/>
        <end position="112"/>
    </location>
</feature>
<feature type="transmembrane region" description="Helical" evidence="2">
    <location>
        <begin position="152"/>
        <end position="172"/>
    </location>
</feature>
<accession>B0Z512</accession>
<dbReference type="EC" id="7.1.1.-"/>
<dbReference type="EMBL" id="EU262889">
    <property type="protein sequence ID" value="ABW98924.1"/>
    <property type="molecule type" value="Genomic_DNA"/>
</dbReference>
<dbReference type="RefSeq" id="YP_001687419.1">
    <property type="nucleotide sequence ID" value="NC_010361.1"/>
</dbReference>
<dbReference type="SMR" id="B0Z512"/>
<dbReference type="GeneID" id="5952012"/>
<dbReference type="GO" id="GO:0009535">
    <property type="term" value="C:chloroplast thylakoid membrane"/>
    <property type="evidence" value="ECO:0007669"/>
    <property type="project" value="UniProtKB-SubCell"/>
</dbReference>
<dbReference type="GO" id="GO:0008137">
    <property type="term" value="F:NADH dehydrogenase (ubiquinone) activity"/>
    <property type="evidence" value="ECO:0007669"/>
    <property type="project" value="InterPro"/>
</dbReference>
<dbReference type="GO" id="GO:0048038">
    <property type="term" value="F:quinone binding"/>
    <property type="evidence" value="ECO:0007669"/>
    <property type="project" value="UniProtKB-KW"/>
</dbReference>
<dbReference type="FunFam" id="1.20.120.1200:FF:000002">
    <property type="entry name" value="NAD(P)H-quinone oxidoreductase subunit 6, chloroplastic"/>
    <property type="match status" value="1"/>
</dbReference>
<dbReference type="Gene3D" id="1.20.120.1200">
    <property type="entry name" value="NADH-ubiquinone/plastoquinone oxidoreductase chain 6, subunit NuoJ"/>
    <property type="match status" value="1"/>
</dbReference>
<dbReference type="InterPro" id="IPR050290">
    <property type="entry name" value="NAD(P)H-Q_Oxidoreduct_6"/>
</dbReference>
<dbReference type="InterPro" id="IPR001457">
    <property type="entry name" value="NADH_UbQ/plastoQ_OxRdtase_su6"/>
</dbReference>
<dbReference type="InterPro" id="IPR042106">
    <property type="entry name" value="Nuo/plastoQ_OxRdtase_6_NuoJ"/>
</dbReference>
<dbReference type="PANTHER" id="PTHR48479">
    <property type="entry name" value="NAD(P)H-QUINONE OXIDOREDUCTASE SUBUNIT 6, CHLOROPLASTIC"/>
    <property type="match status" value="1"/>
</dbReference>
<dbReference type="PANTHER" id="PTHR48479:SF1">
    <property type="entry name" value="NAD(P)H-QUINONE OXIDOREDUCTASE SUBUNIT 6, CHLOROPLASTIC"/>
    <property type="match status" value="1"/>
</dbReference>
<dbReference type="Pfam" id="PF00499">
    <property type="entry name" value="Oxidored_q3"/>
    <property type="match status" value="1"/>
</dbReference>
<evidence type="ECO:0000250" key="1"/>
<evidence type="ECO:0000255" key="2"/>
<evidence type="ECO:0000305" key="3"/>
<comment type="function">
    <text evidence="1">NDH shuttles electrons from NAD(P)H:plastoquinone, via FMN and iron-sulfur (Fe-S) centers, to quinones in the photosynthetic chain and possibly in a chloroplast respiratory chain. The immediate electron acceptor for the enzyme in this species is believed to be plastoquinone. Couples the redox reaction to proton translocation, and thus conserves the redox energy in a proton gradient (By similarity).</text>
</comment>
<comment type="catalytic activity">
    <reaction>
        <text>a plastoquinone + NADH + (n+1) H(+)(in) = a plastoquinol + NAD(+) + n H(+)(out)</text>
        <dbReference type="Rhea" id="RHEA:42608"/>
        <dbReference type="Rhea" id="RHEA-COMP:9561"/>
        <dbReference type="Rhea" id="RHEA-COMP:9562"/>
        <dbReference type="ChEBI" id="CHEBI:15378"/>
        <dbReference type="ChEBI" id="CHEBI:17757"/>
        <dbReference type="ChEBI" id="CHEBI:57540"/>
        <dbReference type="ChEBI" id="CHEBI:57945"/>
        <dbReference type="ChEBI" id="CHEBI:62192"/>
    </reaction>
</comment>
<comment type="catalytic activity">
    <reaction>
        <text>a plastoquinone + NADPH + (n+1) H(+)(in) = a plastoquinol + NADP(+) + n H(+)(out)</text>
        <dbReference type="Rhea" id="RHEA:42612"/>
        <dbReference type="Rhea" id="RHEA-COMP:9561"/>
        <dbReference type="Rhea" id="RHEA-COMP:9562"/>
        <dbReference type="ChEBI" id="CHEBI:15378"/>
        <dbReference type="ChEBI" id="CHEBI:17757"/>
        <dbReference type="ChEBI" id="CHEBI:57783"/>
        <dbReference type="ChEBI" id="CHEBI:58349"/>
        <dbReference type="ChEBI" id="CHEBI:62192"/>
    </reaction>
</comment>
<comment type="subunit">
    <text evidence="1">NDH is composed of at least 16 different subunits, 5 of which are encoded in the nucleus.</text>
</comment>
<comment type="subcellular location">
    <subcellularLocation>
        <location evidence="1">Plastid</location>
        <location evidence="1">Chloroplast thylakoid membrane</location>
        <topology evidence="1">Multi-pass membrane protein</topology>
    </subcellularLocation>
</comment>
<comment type="similarity">
    <text evidence="3">Belongs to the complex I subunit 6 family.</text>
</comment>
<protein>
    <recommendedName>
        <fullName>NAD(P)H-quinone oxidoreductase subunit 6, chloroplastic</fullName>
        <ecNumber>7.1.1.-</ecNumber>
    </recommendedName>
    <alternativeName>
        <fullName>NAD(P)H dehydrogenase subunit 6</fullName>
    </alternativeName>
    <alternativeName>
        <fullName>NADH-plastoquinone oxidoreductase subunit 6</fullName>
    </alternativeName>
</protein>
<keyword id="KW-0150">Chloroplast</keyword>
<keyword id="KW-0472">Membrane</keyword>
<keyword id="KW-0520">NAD</keyword>
<keyword id="KW-0521">NADP</keyword>
<keyword id="KW-0934">Plastid</keyword>
<keyword id="KW-0618">Plastoquinone</keyword>
<keyword id="KW-0874">Quinone</keyword>
<keyword id="KW-0793">Thylakoid</keyword>
<keyword id="KW-1278">Translocase</keyword>
<keyword id="KW-0812">Transmembrane</keyword>
<keyword id="KW-1133">Transmembrane helix</keyword>
<keyword id="KW-0813">Transport</keyword>
<organism>
    <name type="scientific">Oenothera biennis</name>
    <name type="common">German evening primrose</name>
    <name type="synonym">Onagra biennis</name>
    <dbReference type="NCBI Taxonomy" id="3942"/>
    <lineage>
        <taxon>Eukaryota</taxon>
        <taxon>Viridiplantae</taxon>
        <taxon>Streptophyta</taxon>
        <taxon>Embryophyta</taxon>
        <taxon>Tracheophyta</taxon>
        <taxon>Spermatophyta</taxon>
        <taxon>Magnoliopsida</taxon>
        <taxon>eudicotyledons</taxon>
        <taxon>Gunneridae</taxon>
        <taxon>Pentapetalae</taxon>
        <taxon>rosids</taxon>
        <taxon>malvids</taxon>
        <taxon>Myrtales</taxon>
        <taxon>Onagraceae</taxon>
        <taxon>Onagroideae</taxon>
        <taxon>Onagreae</taxon>
        <taxon>Oenothera</taxon>
    </lineage>
</organism>
<gene>
    <name type="primary">ndhG</name>
</gene>
<name>NU6C_OENBI</name>
<sequence>MDLPGPIHDFLLVFLGSGLIVGGLGVVLLTNPIFSAFSLGLVLVCISLFFSLSNSYFVAAAQLLIYVGAINVLILFAVMFMNGSEYSKDLTLWTVGDGITSLVCTSIFISLITTILDTSWYGIIWTTKSNQIIEQDLIGNSQQIGIHLSTDFFLPFELISIILLVSLIGAIAVARQ</sequence>
<geneLocation type="chloroplast"/>
<reference key="1">
    <citation type="journal article" date="2008" name="Nucleic Acids Res.">
        <title>The complete nucleotide sequences of the five genetically distinct plastid genomes of Oenothera, subsection Oenothera: I. Sequence evaluation and plastome evolution.</title>
        <authorList>
            <person name="Greiner S."/>
            <person name="Wang X."/>
            <person name="Rauwolf U."/>
            <person name="Silber M.V."/>
            <person name="Mayer K."/>
            <person name="Meurer J."/>
            <person name="Haberer G."/>
            <person name="Herrmann R.G."/>
        </authorList>
    </citation>
    <scope>NUCLEOTIDE SEQUENCE [LARGE SCALE GENOMIC DNA]</scope>
    <source>
        <strain>cv. Suaveolens Grado</strain>
    </source>
</reference>
<proteinExistence type="inferred from homology"/>